<gene>
    <name type="primary">RFNG</name>
</gene>
<organism>
    <name type="scientific">Gallus gallus</name>
    <name type="common">Chicken</name>
    <dbReference type="NCBI Taxonomy" id="9031"/>
    <lineage>
        <taxon>Eukaryota</taxon>
        <taxon>Metazoa</taxon>
        <taxon>Chordata</taxon>
        <taxon>Craniata</taxon>
        <taxon>Vertebrata</taxon>
        <taxon>Euteleostomi</taxon>
        <taxon>Archelosauria</taxon>
        <taxon>Archosauria</taxon>
        <taxon>Dinosauria</taxon>
        <taxon>Saurischia</taxon>
        <taxon>Theropoda</taxon>
        <taxon>Coelurosauria</taxon>
        <taxon>Aves</taxon>
        <taxon>Neognathae</taxon>
        <taxon>Galloanserae</taxon>
        <taxon>Galliformes</taxon>
        <taxon>Phasianidae</taxon>
        <taxon>Phasianinae</taxon>
        <taxon>Gallus</taxon>
    </lineage>
</organism>
<proteinExistence type="evidence at transcript level"/>
<protein>
    <recommendedName>
        <fullName evidence="7">Beta-1,3-N-acetylglucosaminyltransferase radical fringe</fullName>
        <ecNumber evidence="2">2.4.1.222</ecNumber>
    </recommendedName>
    <alternativeName>
        <fullName>O-fucosylpeptide 3-beta-N-acetylglucosaminyltransferase</fullName>
    </alternativeName>
</protein>
<name>RFNG_CHICK</name>
<accession>O12972</accession>
<accession>O12970</accession>
<comment type="function">
    <text evidence="2 5 6">Glycosyltransferase that initiates the elongation of O-linked fucose residues attached to EGF-like repeats in the extracellular domain of Notch molecules (By similarity). Plays an important role in limb outgrowth, it directs the formation and positioning of the apical ectodermal ridge (AER), one of the key organizer centers of vertebrate limb development (PubMed:9121551, PubMed:9121552).</text>
</comment>
<comment type="catalytic activity">
    <reaction evidence="2">
        <text>3-O-(alpha-L-fucosyl)-L-threonyl-[EGF-like domain protein] + UDP-N-acetyl-alpha-D-glucosamine = 3-O-(N-acetyl-beta-D-glucosaminyl-(1-&gt;3)-alpha-L-fucosyl)-L-threonyl-[EGF-like domain protein] + UDP + H(+)</text>
        <dbReference type="Rhea" id="RHEA:70531"/>
        <dbReference type="Rhea" id="RHEA-COMP:17922"/>
        <dbReference type="Rhea" id="RHEA-COMP:17923"/>
        <dbReference type="ChEBI" id="CHEBI:15378"/>
        <dbReference type="ChEBI" id="CHEBI:57705"/>
        <dbReference type="ChEBI" id="CHEBI:58223"/>
        <dbReference type="ChEBI" id="CHEBI:189631"/>
        <dbReference type="ChEBI" id="CHEBI:189634"/>
        <dbReference type="EC" id="2.4.1.222"/>
    </reaction>
</comment>
<comment type="catalytic activity">
    <reaction evidence="2">
        <text>3-O-(alpha-L-fucosyl)-L-seryl-[EGF-like domain protein] + UDP-N-acetyl-alpha-D-glucosamine = 3-O-(N-acetyl-beta-D-glucosaminyl-(1-&gt;3)-alpha-L-fucosyl)-L-seryl-[EGF-like domain protein] + UDP + H(+)</text>
        <dbReference type="Rhea" id="RHEA:70511"/>
        <dbReference type="Rhea" id="RHEA-COMP:17919"/>
        <dbReference type="Rhea" id="RHEA-COMP:17920"/>
        <dbReference type="ChEBI" id="CHEBI:15378"/>
        <dbReference type="ChEBI" id="CHEBI:57705"/>
        <dbReference type="ChEBI" id="CHEBI:58223"/>
        <dbReference type="ChEBI" id="CHEBI:189632"/>
        <dbReference type="ChEBI" id="CHEBI:189633"/>
        <dbReference type="EC" id="2.4.1.222"/>
    </reaction>
</comment>
<comment type="cofactor">
    <cofactor evidence="2">
        <name>Mn(2+)</name>
        <dbReference type="ChEBI" id="CHEBI:29035"/>
    </cofactor>
    <text evidence="2">Has some activity with cobalt but not with magnesium, calcium and zinc.</text>
</comment>
<comment type="subcellular location">
    <subcellularLocation>
        <location evidence="7">Golgi apparatus membrane</location>
        <topology evidence="7">Single-pass type II membrane protein</topology>
    </subcellularLocation>
</comment>
<comment type="developmental stage">
    <text>Detected at stage 15 in the presumptive dorsal-limb ectoderm. At stages 16-18 expression is restricted to the dorsal side with higher concentration at the dorsoventral boundary and later in the AER. Expression remains restricted to the dorsal ectoderm and the AER until stages 22-24 when it starts to fade in the dorsal ectoderm, but remains in the AER until the last stage examined (27).</text>
</comment>
<comment type="similarity">
    <text evidence="7">Belongs to the glycosyltransferase 31 family.</text>
</comment>
<evidence type="ECO:0000250" key="1"/>
<evidence type="ECO:0000250" key="2">
    <source>
        <dbReference type="UniProtKB" id="O09009"/>
    </source>
</evidence>
<evidence type="ECO:0000255" key="3"/>
<evidence type="ECO:0000256" key="4">
    <source>
        <dbReference type="SAM" id="MobiDB-lite"/>
    </source>
</evidence>
<evidence type="ECO:0000269" key="5">
    <source>
    </source>
</evidence>
<evidence type="ECO:0000269" key="6">
    <source>
    </source>
</evidence>
<evidence type="ECO:0000305" key="7"/>
<dbReference type="EC" id="2.4.1.222" evidence="2"/>
<dbReference type="EMBL" id="U82088">
    <property type="protein sequence ID" value="AAC60107.1"/>
    <property type="molecule type" value="mRNA"/>
</dbReference>
<dbReference type="EMBL" id="U91850">
    <property type="protein sequence ID" value="AAC60100.1"/>
    <property type="molecule type" value="mRNA"/>
</dbReference>
<dbReference type="RefSeq" id="NP_990278.1">
    <property type="nucleotide sequence ID" value="NM_204947.1"/>
</dbReference>
<dbReference type="SMR" id="O12972"/>
<dbReference type="FunCoup" id="O12972">
    <property type="interactions" value="377"/>
</dbReference>
<dbReference type="STRING" id="9031.ENSGALP00000004473"/>
<dbReference type="CAZy" id="GT31">
    <property type="family name" value="Glycosyltransferase Family 31"/>
</dbReference>
<dbReference type="GlyCosmos" id="O12972">
    <property type="glycosylation" value="1 site, No reported glycans"/>
</dbReference>
<dbReference type="GlyGen" id="O12972">
    <property type="glycosylation" value="1 site"/>
</dbReference>
<dbReference type="PaxDb" id="9031-ENSGALP00000004473"/>
<dbReference type="GeneID" id="395789"/>
<dbReference type="KEGG" id="gga:395789"/>
<dbReference type="CTD" id="5986"/>
<dbReference type="VEuPathDB" id="HostDB:geneid_395789"/>
<dbReference type="eggNOG" id="ENOG502QV30">
    <property type="taxonomic scope" value="Eukaryota"/>
</dbReference>
<dbReference type="HOGENOM" id="CLU_056611_0_1_1"/>
<dbReference type="InParanoid" id="O12972"/>
<dbReference type="OrthoDB" id="8959630at2759"/>
<dbReference type="PhylomeDB" id="O12972"/>
<dbReference type="PRO" id="PR:O12972"/>
<dbReference type="Proteomes" id="UP000000539">
    <property type="component" value="Unassembled WGS sequence"/>
</dbReference>
<dbReference type="GO" id="GO:0000139">
    <property type="term" value="C:Golgi membrane"/>
    <property type="evidence" value="ECO:0007669"/>
    <property type="project" value="UniProtKB-SubCell"/>
</dbReference>
<dbReference type="GO" id="GO:0046872">
    <property type="term" value="F:metal ion binding"/>
    <property type="evidence" value="ECO:0007669"/>
    <property type="project" value="UniProtKB-KW"/>
</dbReference>
<dbReference type="GO" id="GO:0033829">
    <property type="term" value="F:O-fucosylpeptide 3-beta-N-acetylglucosaminyltransferase activity"/>
    <property type="evidence" value="ECO:0000318"/>
    <property type="project" value="GO_Central"/>
</dbReference>
<dbReference type="GO" id="GO:0030154">
    <property type="term" value="P:cell differentiation"/>
    <property type="evidence" value="ECO:0007669"/>
    <property type="project" value="UniProtKB-KW"/>
</dbReference>
<dbReference type="GO" id="GO:0007399">
    <property type="term" value="P:nervous system development"/>
    <property type="evidence" value="ECO:0007669"/>
    <property type="project" value="UniProtKB-KW"/>
</dbReference>
<dbReference type="GO" id="GO:0007389">
    <property type="term" value="P:pattern specification process"/>
    <property type="evidence" value="ECO:0007669"/>
    <property type="project" value="InterPro"/>
</dbReference>
<dbReference type="GO" id="GO:0008593">
    <property type="term" value="P:regulation of Notch signaling pathway"/>
    <property type="evidence" value="ECO:0000250"/>
    <property type="project" value="UniProtKB"/>
</dbReference>
<dbReference type="FunFam" id="3.90.550.50:FF:000003">
    <property type="entry name" value="Beta-1,3-N-acetylglucosaminyltransferase"/>
    <property type="match status" value="1"/>
</dbReference>
<dbReference type="Gene3D" id="3.90.550.50">
    <property type="match status" value="1"/>
</dbReference>
<dbReference type="InterPro" id="IPR017374">
    <property type="entry name" value="Fringe"/>
</dbReference>
<dbReference type="InterPro" id="IPR003378">
    <property type="entry name" value="Fringe-like_glycosylTrfase"/>
</dbReference>
<dbReference type="PANTHER" id="PTHR10811">
    <property type="entry name" value="FRINGE-RELATED"/>
    <property type="match status" value="1"/>
</dbReference>
<dbReference type="Pfam" id="PF02434">
    <property type="entry name" value="Fringe"/>
    <property type="match status" value="1"/>
</dbReference>
<dbReference type="PIRSF" id="PIRSF038073">
    <property type="entry name" value="B-acetylgalactosaminyltfrase"/>
    <property type="match status" value="1"/>
</dbReference>
<sequence length="372" mass="40962">MNSSCLGLRRTCFLLSVTAAAVLLLLLPRGQPPAAPRRRPPPAGPSRPSPKREARPAGSDVPGDRGGGSGAAGGGRGVAGSPWPSRRVRMGPPGGSAKESLELKDIFIAVKTTRKYHKTRLELLFQTWISRARGQTFIFTDWEDRELRLKAGDHMINTNCSAVHTRQALCCKMSVEYDKFLESGQKWFCHVDDDNYVNPRTLLRLLSAFSPSQDVYVGRPSLDHPIEAADHVQSDGSKTSVKFWFATGGAGFCISRGLALKMSPWASLGNFISTAERVRLPDDCTIGYIIEGLLEVKLLHSPLFHSHLENLQRLQGESVLQQVTLSYGDPENKHNVVSVGGVFGLQQDPTRFKSVHCLLYPDTIWCPNKKMS</sequence>
<keyword id="KW-0217">Developmental protein</keyword>
<keyword id="KW-0221">Differentiation</keyword>
<keyword id="KW-1015">Disulfide bond</keyword>
<keyword id="KW-0325">Glycoprotein</keyword>
<keyword id="KW-0328">Glycosyltransferase</keyword>
<keyword id="KW-0333">Golgi apparatus</keyword>
<keyword id="KW-0464">Manganese</keyword>
<keyword id="KW-0472">Membrane</keyword>
<keyword id="KW-0479">Metal-binding</keyword>
<keyword id="KW-0524">Neurogenesis</keyword>
<keyword id="KW-1185">Reference proteome</keyword>
<keyword id="KW-0735">Signal-anchor</keyword>
<keyword id="KW-0808">Transferase</keyword>
<keyword id="KW-0812">Transmembrane</keyword>
<keyword id="KW-1133">Transmembrane helix</keyword>
<feature type="chain" id="PRO_0000219188" description="Beta-1,3-N-acetylglucosaminyltransferase radical fringe">
    <location>
        <begin position="1"/>
        <end position="372"/>
    </location>
</feature>
<feature type="topological domain" description="Cytoplasmic" evidence="3">
    <location>
        <begin position="1"/>
        <end position="10"/>
    </location>
</feature>
<feature type="transmembrane region" description="Helical; Signal-anchor for type II membrane protein" evidence="3">
    <location>
        <begin position="11"/>
        <end position="27"/>
    </location>
</feature>
<feature type="topological domain" description="Lumenal" evidence="3">
    <location>
        <begin position="28"/>
        <end position="372"/>
    </location>
</feature>
<feature type="region of interest" description="Disordered" evidence="4">
    <location>
        <begin position="30"/>
        <end position="96"/>
    </location>
</feature>
<feature type="compositionally biased region" description="Pro residues" evidence="4">
    <location>
        <begin position="30"/>
        <end position="48"/>
    </location>
</feature>
<feature type="compositionally biased region" description="Gly residues" evidence="4">
    <location>
        <begin position="64"/>
        <end position="78"/>
    </location>
</feature>
<feature type="active site" evidence="1">
    <location>
        <position position="283"/>
    </location>
</feature>
<feature type="binding site" evidence="1">
    <location>
        <position position="120"/>
    </location>
    <ligand>
        <name>substrate</name>
    </ligand>
</feature>
<feature type="binding site" evidence="1">
    <location>
        <position position="193"/>
    </location>
    <ligand>
        <name>substrate</name>
    </ligand>
</feature>
<feature type="binding site" evidence="1">
    <location>
        <position position="194"/>
    </location>
    <ligand>
        <name>Mn(2+)</name>
        <dbReference type="ChEBI" id="CHEBI:29035"/>
    </ligand>
</feature>
<feature type="binding site" evidence="1">
    <location>
        <position position="307"/>
    </location>
    <ligand>
        <name>Mn(2+)</name>
        <dbReference type="ChEBI" id="CHEBI:29035"/>
    </ligand>
</feature>
<feature type="glycosylation site" description="N-linked (GlcNAc...) asparagine" evidence="3">
    <location>
        <position position="159"/>
    </location>
</feature>
<feature type="disulfide bond" evidence="1">
    <location>
        <begin position="160"/>
        <end position="171"/>
    </location>
</feature>
<feature type="disulfide bond" evidence="1">
    <location>
        <begin position="189"/>
        <end position="253"/>
    </location>
</feature>
<feature type="disulfide bond" evidence="1">
    <location>
        <begin position="357"/>
        <end position="366"/>
    </location>
</feature>
<feature type="sequence conflict" description="In Ref. 2; AAC60100." evidence="7" ref="2">
    <original>N</original>
    <variation>S</variation>
    <location>
        <position position="2"/>
    </location>
</feature>
<feature type="sequence conflict" description="In Ref. 2; AAC60100." evidence="7" ref="2">
    <original>T</original>
    <variation>A</variation>
    <location>
        <position position="11"/>
    </location>
</feature>
<reference key="1">
    <citation type="journal article" date="1997" name="Nature">
        <title>Radical fringe positions the apical ectodermal ridge at the dorsoventral boundary of the vertebrate limb.</title>
        <authorList>
            <person name="Rodriguez-Esteban C."/>
            <person name="Schwabe J.W.R."/>
            <person name="De La Pena J."/>
            <person name="Foys B."/>
            <person name="Eshelman B."/>
            <person name="Izpisua-Belmonte J.-C."/>
        </authorList>
    </citation>
    <scope>NUCLEOTIDE SEQUENCE [MRNA]</scope>
    <scope>FUNCTION</scope>
    <source>
        <tissue>Limb</tissue>
    </source>
</reference>
<reference key="2">
    <citation type="journal article" date="1997" name="Nature">
        <title>Expression of Radical fringe in limb-bud ectoderm regulates apical ectodermal ridge formation.</title>
        <authorList>
            <person name="Laufer E."/>
            <person name="Dahn R."/>
            <person name="Orozco O.E."/>
            <person name="Yeo C.-Y."/>
            <person name="Pisenti J."/>
            <person name="Henrique D."/>
            <person name="Abbott U.K."/>
            <person name="Fallon J.F."/>
            <person name="Tabin C."/>
        </authorList>
    </citation>
    <scope>NUCLEOTIDE SEQUENCE [MRNA]</scope>
    <scope>FUNCTION</scope>
</reference>
<reference key="3">
    <citation type="journal article" date="1997" name="Nature">
        <authorList>
            <person name="Laufer E."/>
            <person name="Dahn R."/>
            <person name="Orozco O.E."/>
            <person name="Yeo C.-Y."/>
            <person name="Pisenti J."/>
            <person name="Henrique D."/>
            <person name="Abbott U.K."/>
            <person name="Fallon J.F."/>
            <person name="Tabin C."/>
        </authorList>
    </citation>
    <scope>ERRATUM OF PUBMED:9121552</scope>
</reference>